<comment type="function">
    <text evidence="1">Catalyzes amidations at positions B, D, E, and G on adenosylcobyrinic A,C-diamide. NH(2) groups are provided by glutamine, and one molecule of ATP is hydrogenolyzed for each amidation.</text>
</comment>
<comment type="pathway">
    <text evidence="1">Cofactor biosynthesis; adenosylcobalamin biosynthesis.</text>
</comment>
<comment type="similarity">
    <text evidence="1">Belongs to the CobB/CobQ family. CobQ subfamily.</text>
</comment>
<name>COBQ_BACFN</name>
<sequence>MNKNLHPLMLAGTGSDVGKSIIAAAFCRIFLQDGYHPAPFKAQNMALNSYATPEGLEIGRAQAVQAEAAGVPCHTDMNPLLLKPSSDHTSQVVLNGRPIGNRNAYEYFRREGREELRKEVHAAFDRLAARYNPVVMEGAGSISEINLRDSDLVNLPMAMHAGADVILVADIDRGGVFASVYGSVMLLRPEERKHIKGILINKFRGDIRLFESGVKMLEDLCGVPVVGVVPYYKDIYIEEEDSVMLQTKNIRAGQGKVNVAVVLLRHLSNFTDFNVLERDPRVHLFYTNNTDELMKADIILLPGSKSTLSDLYELRRNGVAQAIVRAHREGATVMGICGGYQLMGREVCDPDHVEGEIERLPGLGLLPVSTRMQGEKVTRQVRFRFLEDSAVCEGYEIHMGTTTPLADVPVSPLNHLADGREDGYFVDRTCMGTYVHGILDNPSVIDYLLEPFADKLKETAFDYKAFKEEQYDKLAAHVRKHVDLPLIYQILTDND</sequence>
<gene>
    <name evidence="1" type="primary">cobQ</name>
    <name type="ordered locus">BF2524</name>
</gene>
<reference key="1">
    <citation type="journal article" date="2005" name="Science">
        <title>Extensive DNA inversions in the B. fragilis genome control variable gene expression.</title>
        <authorList>
            <person name="Cerdeno-Tarraga A.-M."/>
            <person name="Patrick S."/>
            <person name="Crossman L.C."/>
            <person name="Blakely G."/>
            <person name="Abratt V."/>
            <person name="Lennard N."/>
            <person name="Poxton I."/>
            <person name="Duerden B."/>
            <person name="Harris B."/>
            <person name="Quail M.A."/>
            <person name="Barron A."/>
            <person name="Clark L."/>
            <person name="Corton C."/>
            <person name="Doggett J."/>
            <person name="Holden M.T.G."/>
            <person name="Larke N."/>
            <person name="Line A."/>
            <person name="Lord A."/>
            <person name="Norbertczak H."/>
            <person name="Ormond D."/>
            <person name="Price C."/>
            <person name="Rabbinowitsch E."/>
            <person name="Woodward J."/>
            <person name="Barrell B.G."/>
            <person name="Parkhill J."/>
        </authorList>
    </citation>
    <scope>NUCLEOTIDE SEQUENCE [LARGE SCALE GENOMIC DNA]</scope>
    <source>
        <strain>ATCC 25285 / DSM 2151 / CCUG 4856 / JCM 11019 / LMG 10263 / NCTC 9343 / Onslow / VPI 2553 / EN-2</strain>
    </source>
</reference>
<keyword id="KW-0169">Cobalamin biosynthesis</keyword>
<keyword id="KW-0315">Glutamine amidotransferase</keyword>
<feature type="chain" id="PRO_1000002346" description="Cobyric acid synthase">
    <location>
        <begin position="1"/>
        <end position="495"/>
    </location>
</feature>
<feature type="domain" description="GATase cobBQ-type" evidence="1">
    <location>
        <begin position="256"/>
        <end position="444"/>
    </location>
</feature>
<feature type="active site" description="Nucleophile" evidence="1">
    <location>
        <position position="337"/>
    </location>
</feature>
<feature type="active site" evidence="1">
    <location>
        <position position="436"/>
    </location>
</feature>
<dbReference type="EMBL" id="CR626927">
    <property type="protein sequence ID" value="CAH08224.1"/>
    <property type="molecule type" value="Genomic_DNA"/>
</dbReference>
<dbReference type="RefSeq" id="WP_005787973.1">
    <property type="nucleotide sequence ID" value="NZ_UFTH01000001.1"/>
</dbReference>
<dbReference type="SMR" id="Q5LCE1"/>
<dbReference type="PaxDb" id="272559-BF9343_2443"/>
<dbReference type="KEGG" id="bfs:BF9343_2443"/>
<dbReference type="eggNOG" id="COG1492">
    <property type="taxonomic scope" value="Bacteria"/>
</dbReference>
<dbReference type="HOGENOM" id="CLU_019250_2_2_10"/>
<dbReference type="UniPathway" id="UPA00148"/>
<dbReference type="Proteomes" id="UP000006731">
    <property type="component" value="Chromosome"/>
</dbReference>
<dbReference type="GO" id="GO:0015420">
    <property type="term" value="F:ABC-type vitamin B12 transporter activity"/>
    <property type="evidence" value="ECO:0007669"/>
    <property type="project" value="UniProtKB-UniRule"/>
</dbReference>
<dbReference type="GO" id="GO:0003824">
    <property type="term" value="F:catalytic activity"/>
    <property type="evidence" value="ECO:0007669"/>
    <property type="project" value="InterPro"/>
</dbReference>
<dbReference type="GO" id="GO:0009236">
    <property type="term" value="P:cobalamin biosynthetic process"/>
    <property type="evidence" value="ECO:0007669"/>
    <property type="project" value="UniProtKB-UniRule"/>
</dbReference>
<dbReference type="CDD" id="cd05389">
    <property type="entry name" value="CobQ_N"/>
    <property type="match status" value="1"/>
</dbReference>
<dbReference type="CDD" id="cd01750">
    <property type="entry name" value="GATase1_CobQ"/>
    <property type="match status" value="1"/>
</dbReference>
<dbReference type="Gene3D" id="3.40.50.880">
    <property type="match status" value="1"/>
</dbReference>
<dbReference type="Gene3D" id="3.40.50.300">
    <property type="entry name" value="P-loop containing nucleotide triphosphate hydrolases"/>
    <property type="match status" value="1"/>
</dbReference>
<dbReference type="HAMAP" id="MF_00028">
    <property type="entry name" value="CobQ"/>
    <property type="match status" value="1"/>
</dbReference>
<dbReference type="InterPro" id="IPR029062">
    <property type="entry name" value="Class_I_gatase-like"/>
</dbReference>
<dbReference type="InterPro" id="IPR002586">
    <property type="entry name" value="CobQ/CobB/MinD/ParA_Nub-bd_dom"/>
</dbReference>
<dbReference type="InterPro" id="IPR033949">
    <property type="entry name" value="CobQ_GATase1"/>
</dbReference>
<dbReference type="InterPro" id="IPR047045">
    <property type="entry name" value="CobQ_N"/>
</dbReference>
<dbReference type="InterPro" id="IPR004459">
    <property type="entry name" value="CobQ_synth"/>
</dbReference>
<dbReference type="InterPro" id="IPR011698">
    <property type="entry name" value="GATase_3"/>
</dbReference>
<dbReference type="InterPro" id="IPR027417">
    <property type="entry name" value="P-loop_NTPase"/>
</dbReference>
<dbReference type="NCBIfam" id="TIGR00313">
    <property type="entry name" value="cobQ"/>
    <property type="match status" value="1"/>
</dbReference>
<dbReference type="NCBIfam" id="NF001989">
    <property type="entry name" value="PRK00784.1"/>
    <property type="match status" value="1"/>
</dbReference>
<dbReference type="PANTHER" id="PTHR21343:SF1">
    <property type="entry name" value="COBYRIC ACID SYNTHASE"/>
    <property type="match status" value="1"/>
</dbReference>
<dbReference type="PANTHER" id="PTHR21343">
    <property type="entry name" value="DETHIOBIOTIN SYNTHETASE"/>
    <property type="match status" value="1"/>
</dbReference>
<dbReference type="Pfam" id="PF01656">
    <property type="entry name" value="CbiA"/>
    <property type="match status" value="1"/>
</dbReference>
<dbReference type="Pfam" id="PF07685">
    <property type="entry name" value="GATase_3"/>
    <property type="match status" value="1"/>
</dbReference>
<dbReference type="SUPFAM" id="SSF52317">
    <property type="entry name" value="Class I glutamine amidotransferase-like"/>
    <property type="match status" value="1"/>
</dbReference>
<dbReference type="SUPFAM" id="SSF52540">
    <property type="entry name" value="P-loop containing nucleoside triphosphate hydrolases"/>
    <property type="match status" value="1"/>
</dbReference>
<dbReference type="PROSITE" id="PS51274">
    <property type="entry name" value="GATASE_COBBQ"/>
    <property type="match status" value="1"/>
</dbReference>
<accession>Q5LCE1</accession>
<organism>
    <name type="scientific">Bacteroides fragilis (strain ATCC 25285 / DSM 2151 / CCUG 4856 / JCM 11019 / LMG 10263 / NCTC 9343 / Onslow / VPI 2553 / EN-2)</name>
    <dbReference type="NCBI Taxonomy" id="272559"/>
    <lineage>
        <taxon>Bacteria</taxon>
        <taxon>Pseudomonadati</taxon>
        <taxon>Bacteroidota</taxon>
        <taxon>Bacteroidia</taxon>
        <taxon>Bacteroidales</taxon>
        <taxon>Bacteroidaceae</taxon>
        <taxon>Bacteroides</taxon>
    </lineage>
</organism>
<evidence type="ECO:0000255" key="1">
    <source>
        <dbReference type="HAMAP-Rule" id="MF_00028"/>
    </source>
</evidence>
<proteinExistence type="inferred from homology"/>
<protein>
    <recommendedName>
        <fullName evidence="1">Cobyric acid synthase</fullName>
    </recommendedName>
</protein>